<proteinExistence type="inferred from homology"/>
<reference key="1">
    <citation type="journal article" date="2007" name="Genome Res.">
        <title>Reductive evolution and niche adaptation inferred from the genome of Mycobacterium ulcerans, the causative agent of Buruli ulcer.</title>
        <authorList>
            <person name="Stinear T.P."/>
            <person name="Seemann T."/>
            <person name="Pidot S."/>
            <person name="Frigui W."/>
            <person name="Reysset G."/>
            <person name="Garnier T."/>
            <person name="Meurice G."/>
            <person name="Simon D."/>
            <person name="Bouchier C."/>
            <person name="Ma L."/>
            <person name="Tichit M."/>
            <person name="Porter J.L."/>
            <person name="Ryan J."/>
            <person name="Johnson P.D.R."/>
            <person name="Davies J.K."/>
            <person name="Jenkin G.A."/>
            <person name="Small P.L.C."/>
            <person name="Jones L.M."/>
            <person name="Tekaia F."/>
            <person name="Laval F."/>
            <person name="Daffe M."/>
            <person name="Parkhill J."/>
            <person name="Cole S.T."/>
        </authorList>
    </citation>
    <scope>NUCLEOTIDE SEQUENCE [LARGE SCALE GENOMIC DNA]</scope>
    <source>
        <strain>Agy99</strain>
    </source>
</reference>
<name>TSAD_MYCUA</name>
<comment type="function">
    <text evidence="1">Required for the formation of a threonylcarbamoyl group on adenosine at position 37 (t(6)A37) in tRNAs that read codons beginning with adenine. Is involved in the transfer of the threonylcarbamoyl moiety of threonylcarbamoyl-AMP (TC-AMP) to the N6 group of A37, together with TsaE and TsaB. TsaD likely plays a direct catalytic role in this reaction.</text>
</comment>
<comment type="catalytic activity">
    <reaction evidence="1">
        <text>L-threonylcarbamoyladenylate + adenosine(37) in tRNA = N(6)-L-threonylcarbamoyladenosine(37) in tRNA + AMP + H(+)</text>
        <dbReference type="Rhea" id="RHEA:37059"/>
        <dbReference type="Rhea" id="RHEA-COMP:10162"/>
        <dbReference type="Rhea" id="RHEA-COMP:10163"/>
        <dbReference type="ChEBI" id="CHEBI:15378"/>
        <dbReference type="ChEBI" id="CHEBI:73682"/>
        <dbReference type="ChEBI" id="CHEBI:74411"/>
        <dbReference type="ChEBI" id="CHEBI:74418"/>
        <dbReference type="ChEBI" id="CHEBI:456215"/>
        <dbReference type="EC" id="2.3.1.234"/>
    </reaction>
</comment>
<comment type="cofactor">
    <cofactor evidence="1">
        <name>Fe(2+)</name>
        <dbReference type="ChEBI" id="CHEBI:29033"/>
    </cofactor>
    <text evidence="1">Binds 1 Fe(2+) ion per subunit.</text>
</comment>
<comment type="subcellular location">
    <subcellularLocation>
        <location evidence="1">Cytoplasm</location>
    </subcellularLocation>
</comment>
<comment type="similarity">
    <text evidence="1">Belongs to the KAE1 / TsaD family.</text>
</comment>
<organism>
    <name type="scientific">Mycobacterium ulcerans (strain Agy99)</name>
    <dbReference type="NCBI Taxonomy" id="362242"/>
    <lineage>
        <taxon>Bacteria</taxon>
        <taxon>Bacillati</taxon>
        <taxon>Actinomycetota</taxon>
        <taxon>Actinomycetes</taxon>
        <taxon>Mycobacteriales</taxon>
        <taxon>Mycobacteriaceae</taxon>
        <taxon>Mycobacterium</taxon>
        <taxon>Mycobacterium ulcerans group</taxon>
    </lineage>
</organism>
<protein>
    <recommendedName>
        <fullName evidence="1">tRNA N6-adenosine threonylcarbamoyltransferase</fullName>
        <ecNumber evidence="1">2.3.1.234</ecNumber>
    </recommendedName>
    <alternativeName>
        <fullName evidence="1">N6-L-threonylcarbamoyladenine synthase</fullName>
        <shortName evidence="1">t(6)A synthase</shortName>
    </alternativeName>
    <alternativeName>
        <fullName evidence="1">t(6)A37 threonylcarbamoyladenosine biosynthesis protein TsaD</fullName>
    </alternativeName>
    <alternativeName>
        <fullName evidence="1">tRNA threonylcarbamoyladenosine biosynthesis protein TsaD</fullName>
    </alternativeName>
</protein>
<accession>A0PME7</accession>
<sequence length="343" mass="34934">MPGTIILAIETSCDETGVGITRLEADGTLTLLADEVASSVDEHVRFGGVVPEIASRAHLEALGPAMRRALTTAGIVRPDVVATTIGPGLAGALLVGVAAAKAYAAAWGVPFYAVNHLGGHLAADVYEHGPLPECVALLVSGGHTHLLHVRSLGEPMVELGATVDDAAGEAYDKVARLLGLGYPGGKVLDDLARSGDPDAIVFPRGMTGPSDDPCAFSFSGLKTAVACYVEAHPDFRPADVAAGFQEAVADVLTRKAVRAATGLGVSTLLIAGGVAANSRLRELATQRCSEAGLTLRIPRPRLCTDNGAMIAAFAAHLVAAKAAPSPLDVPSDPGLPVVKGQVG</sequence>
<feature type="chain" id="PRO_0000303436" description="tRNA N6-adenosine threonylcarbamoyltransferase">
    <location>
        <begin position="1"/>
        <end position="343"/>
    </location>
</feature>
<feature type="binding site" evidence="1">
    <location>
        <position position="116"/>
    </location>
    <ligand>
        <name>Fe cation</name>
        <dbReference type="ChEBI" id="CHEBI:24875"/>
    </ligand>
</feature>
<feature type="binding site" evidence="1">
    <location>
        <position position="120"/>
    </location>
    <ligand>
        <name>Fe cation</name>
        <dbReference type="ChEBI" id="CHEBI:24875"/>
    </ligand>
</feature>
<feature type="binding site" evidence="1">
    <location>
        <begin position="138"/>
        <end position="142"/>
    </location>
    <ligand>
        <name>substrate</name>
    </ligand>
</feature>
<feature type="binding site" evidence="1">
    <location>
        <position position="172"/>
    </location>
    <ligand>
        <name>substrate</name>
    </ligand>
</feature>
<feature type="binding site" evidence="1">
    <location>
        <position position="185"/>
    </location>
    <ligand>
        <name>substrate</name>
    </ligand>
</feature>
<feature type="binding site" evidence="1">
    <location>
        <position position="189"/>
    </location>
    <ligand>
        <name>substrate</name>
    </ligand>
</feature>
<feature type="binding site" evidence="1">
    <location>
        <position position="277"/>
    </location>
    <ligand>
        <name>substrate</name>
    </ligand>
</feature>
<feature type="binding site" evidence="1">
    <location>
        <position position="305"/>
    </location>
    <ligand>
        <name>Fe cation</name>
        <dbReference type="ChEBI" id="CHEBI:24875"/>
    </ligand>
</feature>
<dbReference type="EC" id="2.3.1.234" evidence="1"/>
<dbReference type="EMBL" id="CP000325">
    <property type="protein sequence ID" value="ABL03516.1"/>
    <property type="molecule type" value="Genomic_DNA"/>
</dbReference>
<dbReference type="RefSeq" id="WP_011739139.1">
    <property type="nucleotide sequence ID" value="NC_008611.1"/>
</dbReference>
<dbReference type="SMR" id="A0PME7"/>
<dbReference type="KEGG" id="mul:MUL_0884"/>
<dbReference type="eggNOG" id="COG0533">
    <property type="taxonomic scope" value="Bacteria"/>
</dbReference>
<dbReference type="HOGENOM" id="CLU_023208_0_2_11"/>
<dbReference type="Proteomes" id="UP000000765">
    <property type="component" value="Chromosome"/>
</dbReference>
<dbReference type="GO" id="GO:0005737">
    <property type="term" value="C:cytoplasm"/>
    <property type="evidence" value="ECO:0007669"/>
    <property type="project" value="UniProtKB-SubCell"/>
</dbReference>
<dbReference type="GO" id="GO:0005506">
    <property type="term" value="F:iron ion binding"/>
    <property type="evidence" value="ECO:0007669"/>
    <property type="project" value="UniProtKB-UniRule"/>
</dbReference>
<dbReference type="GO" id="GO:0061711">
    <property type="term" value="F:N(6)-L-threonylcarbamoyladenine synthase activity"/>
    <property type="evidence" value="ECO:0007669"/>
    <property type="project" value="UniProtKB-EC"/>
</dbReference>
<dbReference type="GO" id="GO:0002949">
    <property type="term" value="P:tRNA threonylcarbamoyladenosine modification"/>
    <property type="evidence" value="ECO:0007669"/>
    <property type="project" value="UniProtKB-UniRule"/>
</dbReference>
<dbReference type="CDD" id="cd24133">
    <property type="entry name" value="ASKHA_NBD_TsaD_bac"/>
    <property type="match status" value="1"/>
</dbReference>
<dbReference type="FunFam" id="3.30.420.40:FF:000012">
    <property type="entry name" value="tRNA N6-adenosine threonylcarbamoyltransferase"/>
    <property type="match status" value="1"/>
</dbReference>
<dbReference type="FunFam" id="3.30.420.40:FF:000040">
    <property type="entry name" value="tRNA N6-adenosine threonylcarbamoyltransferase"/>
    <property type="match status" value="1"/>
</dbReference>
<dbReference type="Gene3D" id="3.30.420.40">
    <property type="match status" value="2"/>
</dbReference>
<dbReference type="HAMAP" id="MF_01445">
    <property type="entry name" value="TsaD"/>
    <property type="match status" value="1"/>
</dbReference>
<dbReference type="InterPro" id="IPR043129">
    <property type="entry name" value="ATPase_NBD"/>
</dbReference>
<dbReference type="InterPro" id="IPR000905">
    <property type="entry name" value="Gcp-like_dom"/>
</dbReference>
<dbReference type="InterPro" id="IPR017861">
    <property type="entry name" value="KAE1/TsaD"/>
</dbReference>
<dbReference type="InterPro" id="IPR017860">
    <property type="entry name" value="Peptidase_M22_CS"/>
</dbReference>
<dbReference type="InterPro" id="IPR022450">
    <property type="entry name" value="TsaD"/>
</dbReference>
<dbReference type="NCBIfam" id="TIGR00329">
    <property type="entry name" value="gcp_kae1"/>
    <property type="match status" value="1"/>
</dbReference>
<dbReference type="NCBIfam" id="TIGR03723">
    <property type="entry name" value="T6A_TsaD_YgjD"/>
    <property type="match status" value="1"/>
</dbReference>
<dbReference type="PANTHER" id="PTHR11735">
    <property type="entry name" value="TRNA N6-ADENOSINE THREONYLCARBAMOYLTRANSFERASE"/>
    <property type="match status" value="1"/>
</dbReference>
<dbReference type="PANTHER" id="PTHR11735:SF6">
    <property type="entry name" value="TRNA N6-ADENOSINE THREONYLCARBAMOYLTRANSFERASE, MITOCHONDRIAL"/>
    <property type="match status" value="1"/>
</dbReference>
<dbReference type="Pfam" id="PF00814">
    <property type="entry name" value="TsaD"/>
    <property type="match status" value="1"/>
</dbReference>
<dbReference type="PRINTS" id="PR00789">
    <property type="entry name" value="OSIALOPTASE"/>
</dbReference>
<dbReference type="SUPFAM" id="SSF53067">
    <property type="entry name" value="Actin-like ATPase domain"/>
    <property type="match status" value="2"/>
</dbReference>
<dbReference type="PROSITE" id="PS01016">
    <property type="entry name" value="GLYCOPROTEASE"/>
    <property type="match status" value="1"/>
</dbReference>
<gene>
    <name evidence="1" type="primary">tsaD</name>
    <name type="synonym">gcp</name>
    <name type="ordered locus">MUL_0884</name>
</gene>
<keyword id="KW-0012">Acyltransferase</keyword>
<keyword id="KW-0963">Cytoplasm</keyword>
<keyword id="KW-0408">Iron</keyword>
<keyword id="KW-0479">Metal-binding</keyword>
<keyword id="KW-0808">Transferase</keyword>
<keyword id="KW-0819">tRNA processing</keyword>
<evidence type="ECO:0000255" key="1">
    <source>
        <dbReference type="HAMAP-Rule" id="MF_01445"/>
    </source>
</evidence>